<comment type="function">
    <text evidence="1">Catalyzes the stereoinversion of LL-2,6-diaminopimelate (L,L-DAP) to meso-diaminopimelate (meso-DAP), a precursor of L-lysine and an essential component of the bacterial peptidoglycan.</text>
</comment>
<comment type="catalytic activity">
    <reaction evidence="1">
        <text>(2S,6S)-2,6-diaminopimelate = meso-2,6-diaminopimelate</text>
        <dbReference type="Rhea" id="RHEA:15393"/>
        <dbReference type="ChEBI" id="CHEBI:57609"/>
        <dbReference type="ChEBI" id="CHEBI:57791"/>
        <dbReference type="EC" id="5.1.1.7"/>
    </reaction>
</comment>
<comment type="pathway">
    <text evidence="1">Amino-acid biosynthesis; L-lysine biosynthesis via DAP pathway; DL-2,6-diaminopimelate from LL-2,6-diaminopimelate: step 1/1.</text>
</comment>
<comment type="subunit">
    <text evidence="1">Homodimer.</text>
</comment>
<comment type="subcellular location">
    <subcellularLocation>
        <location evidence="1">Cytoplasm</location>
    </subcellularLocation>
</comment>
<comment type="similarity">
    <text evidence="1">Belongs to the diaminopimelate epimerase family.</text>
</comment>
<gene>
    <name evidence="1" type="primary">dapF</name>
    <name type="ordered locus">VS_3047</name>
</gene>
<protein>
    <recommendedName>
        <fullName evidence="1">Diaminopimelate epimerase</fullName>
        <shortName evidence="1">DAP epimerase</shortName>
        <ecNumber evidence="1">5.1.1.7</ecNumber>
    </recommendedName>
    <alternativeName>
        <fullName evidence="1">PLP-independent amino acid racemase</fullName>
    </alternativeName>
</protein>
<feature type="chain" id="PRO_1000124433" description="Diaminopimelate epimerase">
    <location>
        <begin position="1"/>
        <end position="276"/>
    </location>
</feature>
<feature type="active site" description="Proton donor" evidence="1">
    <location>
        <position position="75"/>
    </location>
</feature>
<feature type="active site" description="Proton acceptor" evidence="1">
    <location>
        <position position="219"/>
    </location>
</feature>
<feature type="binding site" evidence="1">
    <location>
        <position position="13"/>
    </location>
    <ligand>
        <name>substrate</name>
    </ligand>
</feature>
<feature type="binding site" evidence="1">
    <location>
        <position position="46"/>
    </location>
    <ligand>
        <name>substrate</name>
    </ligand>
</feature>
<feature type="binding site" evidence="1">
    <location>
        <position position="66"/>
    </location>
    <ligand>
        <name>substrate</name>
    </ligand>
</feature>
<feature type="binding site" evidence="1">
    <location>
        <begin position="76"/>
        <end position="77"/>
    </location>
    <ligand>
        <name>substrate</name>
    </ligand>
</feature>
<feature type="binding site" evidence="1">
    <location>
        <position position="159"/>
    </location>
    <ligand>
        <name>substrate</name>
    </ligand>
</feature>
<feature type="binding site" evidence="1">
    <location>
        <position position="192"/>
    </location>
    <ligand>
        <name>substrate</name>
    </ligand>
</feature>
<feature type="binding site" evidence="1">
    <location>
        <begin position="210"/>
        <end position="211"/>
    </location>
    <ligand>
        <name>substrate</name>
    </ligand>
</feature>
<feature type="binding site" evidence="1">
    <location>
        <begin position="220"/>
        <end position="221"/>
    </location>
    <ligand>
        <name>substrate</name>
    </ligand>
</feature>
<feature type="site" description="Could be important to modulate the pK values of the two catalytic cysteine residues" evidence="1">
    <location>
        <position position="161"/>
    </location>
</feature>
<feature type="site" description="Could be important to modulate the pK values of the two catalytic cysteine residues" evidence="1">
    <location>
        <position position="210"/>
    </location>
</feature>
<feature type="site" description="Important for dimerization" evidence="1">
    <location>
        <position position="270"/>
    </location>
</feature>
<reference key="1">
    <citation type="submission" date="2009-02" db="EMBL/GenBank/DDBJ databases">
        <title>Vibrio splendidus str. LGP32 complete genome.</title>
        <authorList>
            <person name="Mazel D."/>
            <person name="Le Roux F."/>
        </authorList>
    </citation>
    <scope>NUCLEOTIDE SEQUENCE [LARGE SCALE GENOMIC DNA]</scope>
    <source>
        <strain>LGP32</strain>
    </source>
</reference>
<name>DAPF_VIBA3</name>
<dbReference type="EC" id="5.1.1.7" evidence="1"/>
<dbReference type="EMBL" id="FM954972">
    <property type="protein sequence ID" value="CAV20325.1"/>
    <property type="molecule type" value="Genomic_DNA"/>
</dbReference>
<dbReference type="SMR" id="B7VMD4"/>
<dbReference type="STRING" id="575788.VS_3047"/>
<dbReference type="KEGG" id="vsp:VS_3047"/>
<dbReference type="eggNOG" id="COG0253">
    <property type="taxonomic scope" value="Bacteria"/>
</dbReference>
<dbReference type="HOGENOM" id="CLU_053306_1_1_6"/>
<dbReference type="UniPathway" id="UPA00034">
    <property type="reaction ID" value="UER00025"/>
</dbReference>
<dbReference type="Proteomes" id="UP000009100">
    <property type="component" value="Chromosome 1"/>
</dbReference>
<dbReference type="GO" id="GO:0005829">
    <property type="term" value="C:cytosol"/>
    <property type="evidence" value="ECO:0007669"/>
    <property type="project" value="TreeGrafter"/>
</dbReference>
<dbReference type="GO" id="GO:0008837">
    <property type="term" value="F:diaminopimelate epimerase activity"/>
    <property type="evidence" value="ECO:0007669"/>
    <property type="project" value="UniProtKB-UniRule"/>
</dbReference>
<dbReference type="GO" id="GO:0009089">
    <property type="term" value="P:lysine biosynthetic process via diaminopimelate"/>
    <property type="evidence" value="ECO:0007669"/>
    <property type="project" value="UniProtKB-UniRule"/>
</dbReference>
<dbReference type="FunFam" id="3.10.310.10:FF:000001">
    <property type="entry name" value="Diaminopimelate epimerase"/>
    <property type="match status" value="1"/>
</dbReference>
<dbReference type="FunFam" id="3.10.310.10:FF:000002">
    <property type="entry name" value="Diaminopimelate epimerase"/>
    <property type="match status" value="1"/>
</dbReference>
<dbReference type="Gene3D" id="3.10.310.10">
    <property type="entry name" value="Diaminopimelate Epimerase, Chain A, domain 1"/>
    <property type="match status" value="2"/>
</dbReference>
<dbReference type="HAMAP" id="MF_00197">
    <property type="entry name" value="DAP_epimerase"/>
    <property type="match status" value="1"/>
</dbReference>
<dbReference type="InterPro" id="IPR018510">
    <property type="entry name" value="DAP_epimerase_AS"/>
</dbReference>
<dbReference type="InterPro" id="IPR001653">
    <property type="entry name" value="DAP_epimerase_DapF"/>
</dbReference>
<dbReference type="NCBIfam" id="TIGR00652">
    <property type="entry name" value="DapF"/>
    <property type="match status" value="1"/>
</dbReference>
<dbReference type="PANTHER" id="PTHR31689:SF0">
    <property type="entry name" value="DIAMINOPIMELATE EPIMERASE"/>
    <property type="match status" value="1"/>
</dbReference>
<dbReference type="PANTHER" id="PTHR31689">
    <property type="entry name" value="DIAMINOPIMELATE EPIMERASE, CHLOROPLASTIC"/>
    <property type="match status" value="1"/>
</dbReference>
<dbReference type="Pfam" id="PF01678">
    <property type="entry name" value="DAP_epimerase"/>
    <property type="match status" value="2"/>
</dbReference>
<dbReference type="SUPFAM" id="SSF54506">
    <property type="entry name" value="Diaminopimelate epimerase-like"/>
    <property type="match status" value="1"/>
</dbReference>
<dbReference type="PROSITE" id="PS01326">
    <property type="entry name" value="DAP_EPIMERASE"/>
    <property type="match status" value="1"/>
</dbReference>
<accession>B7VMD4</accession>
<evidence type="ECO:0000255" key="1">
    <source>
        <dbReference type="HAMAP-Rule" id="MF_00197"/>
    </source>
</evidence>
<sequence length="276" mass="30411">MHFHFSKMHGLGNDFMVVDCITQNIFFSPDLIRRLADRHTGVGFDQLLVVEAPYDPETDFHYRIFNADGSEVEQCGNGARCFARFVRMKGLTNKYSINVSTKKGKMVLKIEDNDLITVNMGIPEFEPGKIPFKAKQPEKTYILRTDVHTLFCGAVSMGNPHVVTVVDDVDTADVDTLGPLLESHERFPERVNAGFMQVVNREEVRLRVYERGAGETQACGSGACGAVAVGITQGLLAENVKVRLPGGDLHISWQGPGKPLLMTGPATHVFDGQLSC</sequence>
<keyword id="KW-0028">Amino-acid biosynthesis</keyword>
<keyword id="KW-0963">Cytoplasm</keyword>
<keyword id="KW-0413">Isomerase</keyword>
<keyword id="KW-0457">Lysine biosynthesis</keyword>
<organism>
    <name type="scientific">Vibrio atlanticus (strain LGP32)</name>
    <name type="common">Vibrio splendidus (strain Mel32)</name>
    <dbReference type="NCBI Taxonomy" id="575788"/>
    <lineage>
        <taxon>Bacteria</taxon>
        <taxon>Pseudomonadati</taxon>
        <taxon>Pseudomonadota</taxon>
        <taxon>Gammaproteobacteria</taxon>
        <taxon>Vibrionales</taxon>
        <taxon>Vibrionaceae</taxon>
        <taxon>Vibrio</taxon>
    </lineage>
</organism>
<proteinExistence type="inferred from homology"/>